<accession>Q52NJ0</accession>
<protein>
    <recommendedName>
        <fullName>Prenylated Rab acceptor protein 1</fullName>
    </recommendedName>
    <alternativeName>
        <fullName>PRA1 family protein 1</fullName>
    </alternativeName>
</protein>
<comment type="function">
    <text evidence="2">General Rab protein regulator required for vesicle formation from the Golgi complex. May control vesicle docking and fusion by mediating the action of Rab GTPases to the SNARE complexes. In addition it inhibits the removal of Rab GTPases from the membrane by GDI1.</text>
</comment>
<comment type="subunit">
    <text evidence="1">Homodimer. Interacts with VAMP2 (synaptobrevin-2), prenylated Rab proteins, GDI1, NRDG1 and PCLO (By similarity).</text>
</comment>
<comment type="subcellular location">
    <subcellularLocation>
        <location evidence="2">Cell membrane</location>
        <topology evidence="3">Multi-pass membrane protein</topology>
    </subcellularLocation>
    <subcellularLocation>
        <location evidence="2">Cytoplasm</location>
    </subcellularLocation>
    <subcellularLocation>
        <location evidence="2">Golgi apparatus</location>
    </subcellularLocation>
    <subcellularLocation>
        <location evidence="2">Cytoplasmic vesicle</location>
        <location evidence="2">Secretory vesicle</location>
        <location evidence="2">Synaptic vesicle</location>
    </subcellularLocation>
    <text evidence="2">According to some authors, it is an integral membrane protein, while others showed that it is cytoplasmic and membrane-associated to Golgi and synaptic vesicles.</text>
</comment>
<comment type="similarity">
    <text evidence="4">Belongs to the PRA1 family.</text>
</comment>
<organism>
    <name type="scientific">Sus scrofa</name>
    <name type="common">Pig</name>
    <dbReference type="NCBI Taxonomy" id="9823"/>
    <lineage>
        <taxon>Eukaryota</taxon>
        <taxon>Metazoa</taxon>
        <taxon>Chordata</taxon>
        <taxon>Craniata</taxon>
        <taxon>Vertebrata</taxon>
        <taxon>Euteleostomi</taxon>
        <taxon>Mammalia</taxon>
        <taxon>Eutheria</taxon>
        <taxon>Laurasiatheria</taxon>
        <taxon>Artiodactyla</taxon>
        <taxon>Suina</taxon>
        <taxon>Suidae</taxon>
        <taxon>Sus</taxon>
    </lineage>
</organism>
<dbReference type="EMBL" id="AY996815">
    <property type="protein sequence ID" value="AAY17511.1"/>
    <property type="molecule type" value="mRNA"/>
</dbReference>
<dbReference type="RefSeq" id="NP_001026965.1">
    <property type="nucleotide sequence ID" value="NM_001031795.1"/>
</dbReference>
<dbReference type="FunCoup" id="Q52NJ0">
    <property type="interactions" value="431"/>
</dbReference>
<dbReference type="STRING" id="9823.ENSSSCP00000003300"/>
<dbReference type="PaxDb" id="9823-ENSSSCP00000003300"/>
<dbReference type="PeptideAtlas" id="Q52NJ0"/>
<dbReference type="GeneID" id="595125"/>
<dbReference type="KEGG" id="ssc:595125"/>
<dbReference type="CTD" id="10567"/>
<dbReference type="eggNOG" id="KOG3142">
    <property type="taxonomic scope" value="Eukaryota"/>
</dbReference>
<dbReference type="InParanoid" id="Q52NJ0"/>
<dbReference type="OrthoDB" id="63113at2759"/>
<dbReference type="Proteomes" id="UP000008227">
    <property type="component" value="Unplaced"/>
</dbReference>
<dbReference type="Proteomes" id="UP000314985">
    <property type="component" value="Unplaced"/>
</dbReference>
<dbReference type="Proteomes" id="UP000694570">
    <property type="component" value="Unplaced"/>
</dbReference>
<dbReference type="Proteomes" id="UP000694571">
    <property type="component" value="Unplaced"/>
</dbReference>
<dbReference type="Proteomes" id="UP000694720">
    <property type="component" value="Unplaced"/>
</dbReference>
<dbReference type="Proteomes" id="UP000694722">
    <property type="component" value="Unplaced"/>
</dbReference>
<dbReference type="Proteomes" id="UP000694723">
    <property type="component" value="Unplaced"/>
</dbReference>
<dbReference type="Proteomes" id="UP000694724">
    <property type="component" value="Unplaced"/>
</dbReference>
<dbReference type="Proteomes" id="UP000694725">
    <property type="component" value="Unplaced"/>
</dbReference>
<dbReference type="Proteomes" id="UP000694726">
    <property type="component" value="Unplaced"/>
</dbReference>
<dbReference type="Proteomes" id="UP000694727">
    <property type="component" value="Unplaced"/>
</dbReference>
<dbReference type="Proteomes" id="UP000694728">
    <property type="component" value="Unplaced"/>
</dbReference>
<dbReference type="GO" id="GO:0005794">
    <property type="term" value="C:Golgi apparatus"/>
    <property type="evidence" value="ECO:0000318"/>
    <property type="project" value="GO_Central"/>
</dbReference>
<dbReference type="GO" id="GO:0005886">
    <property type="term" value="C:plasma membrane"/>
    <property type="evidence" value="ECO:0007669"/>
    <property type="project" value="UniProtKB-SubCell"/>
</dbReference>
<dbReference type="GO" id="GO:0008021">
    <property type="term" value="C:synaptic vesicle"/>
    <property type="evidence" value="ECO:0007669"/>
    <property type="project" value="UniProtKB-SubCell"/>
</dbReference>
<dbReference type="InterPro" id="IPR004895">
    <property type="entry name" value="Prenylated_rab_accept_PRA1"/>
</dbReference>
<dbReference type="PANTHER" id="PTHR19317">
    <property type="entry name" value="PRENYLATED RAB ACCEPTOR 1-RELATED"/>
    <property type="match status" value="1"/>
</dbReference>
<dbReference type="PANTHER" id="PTHR19317:SF0">
    <property type="entry name" value="PRENYLATED RAB ACCEPTOR PROTEIN 1"/>
    <property type="match status" value="1"/>
</dbReference>
<dbReference type="Pfam" id="PF03208">
    <property type="entry name" value="PRA1"/>
    <property type="match status" value="1"/>
</dbReference>
<keyword id="KW-1003">Cell membrane</keyword>
<keyword id="KW-0963">Cytoplasm</keyword>
<keyword id="KW-0968">Cytoplasmic vesicle</keyword>
<keyword id="KW-0333">Golgi apparatus</keyword>
<keyword id="KW-0472">Membrane</keyword>
<keyword id="KW-1185">Reference proteome</keyword>
<keyword id="KW-0770">Synapse</keyword>
<keyword id="KW-0812">Transmembrane</keyword>
<keyword id="KW-1133">Transmembrane helix</keyword>
<sequence>MAAQKDQQKDAEAEGLSATTLLPKLIPSGAGREWLERRRATIRPWGSFVDQRRFSRPRNLGELCQRLVRNVEYYQSNYVFVFLGLILYCVVTSPMLLVALAVFFGACYILYLRTLQSKFVLFGREVSPAHQYALAGGVSFPFFWLAGAGSAVFWVLGATLVVIGSHAAFHQIEAVDGEELQMEPV</sequence>
<name>PRAF1_PIG</name>
<feature type="chain" id="PRO_0000266023" description="Prenylated Rab acceptor protein 1">
    <location>
        <begin position="1"/>
        <end position="185"/>
    </location>
</feature>
<feature type="topological domain" description="Cytoplasmic" evidence="1">
    <location>
        <begin position="1"/>
        <end position="78"/>
    </location>
</feature>
<feature type="transmembrane region" description="Helical" evidence="1">
    <location>
        <begin position="79"/>
        <end position="94"/>
    </location>
</feature>
<feature type="transmembrane region" description="Helical" evidence="1">
    <location>
        <begin position="95"/>
        <end position="112"/>
    </location>
</feature>
<feature type="topological domain" description="Cytoplasmic" evidence="1">
    <location>
        <begin position="113"/>
        <end position="131"/>
    </location>
</feature>
<feature type="transmembrane region" description="Helical" evidence="1">
    <location>
        <begin position="132"/>
        <end position="148"/>
    </location>
</feature>
<feature type="transmembrane region" description="Helical" evidence="1">
    <location>
        <begin position="149"/>
        <end position="165"/>
    </location>
</feature>
<feature type="topological domain" description="Cytoplasmic" evidence="1">
    <location>
        <begin position="166"/>
        <end position="185"/>
    </location>
</feature>
<feature type="region of interest" description="Required for interaction with prenylated RAB3A and VAMP2" evidence="1">
    <location>
        <begin position="30"/>
        <end position="54"/>
    </location>
</feature>
<feature type="region of interest" description="Required for interaction with GDI1" evidence="1">
    <location>
        <begin position="165"/>
        <end position="185"/>
    </location>
</feature>
<feature type="region of interest" description="Homodimerization" evidence="1">
    <location>
        <begin position="175"/>
        <end position="185"/>
    </location>
</feature>
<feature type="region of interest" description="Required for interaction with prenylated RAB3A and VAMP2" evidence="1">
    <location>
        <begin position="175"/>
        <end position="185"/>
    </location>
</feature>
<evidence type="ECO:0000250" key="1"/>
<evidence type="ECO:0000250" key="2">
    <source>
        <dbReference type="UniProtKB" id="O35394"/>
    </source>
</evidence>
<evidence type="ECO:0000255" key="3"/>
<evidence type="ECO:0000305" key="4"/>
<reference key="1">
    <citation type="submission" date="2005-04" db="EMBL/GenBank/DDBJ databases">
        <authorList>
            <person name="Liu G.Y."/>
            <person name="Xiong Z.Y."/>
        </authorList>
    </citation>
    <scope>NUCLEOTIDE SEQUENCE [LARGE SCALE MRNA]</scope>
</reference>
<gene>
    <name type="primary">RABAC1</name>
    <name type="synonym">PRAF1</name>
</gene>
<proteinExistence type="evidence at transcript level"/>